<dbReference type="EMBL" id="X96768">
    <property type="protein sequence ID" value="CAA65543.1"/>
    <property type="molecule type" value="mRNA"/>
</dbReference>
<dbReference type="EMBL" id="BC153251">
    <property type="protein sequence ID" value="AAI53252.1"/>
    <property type="molecule type" value="mRNA"/>
</dbReference>
<dbReference type="RefSeq" id="NP_001099115.1">
    <property type="nucleotide sequence ID" value="NM_001105645.1"/>
</dbReference>
<dbReference type="PDB" id="3MKR">
    <property type="method" value="X-ray"/>
    <property type="resolution" value="2.60 A"/>
    <property type="chains" value="B=905-1224"/>
</dbReference>
<dbReference type="PDBsum" id="3MKR"/>
<dbReference type="SMR" id="Q27954"/>
<dbReference type="BioGRID" id="780059">
    <property type="interactions" value="1"/>
</dbReference>
<dbReference type="FunCoup" id="Q27954">
    <property type="interactions" value="4033"/>
</dbReference>
<dbReference type="IntAct" id="Q27954">
    <property type="interactions" value="2"/>
</dbReference>
<dbReference type="MINT" id="Q27954"/>
<dbReference type="STRING" id="9913.ENSBTAP00000005672"/>
<dbReference type="PaxDb" id="9913-ENSBTAP00000005672"/>
<dbReference type="PeptideAtlas" id="Q27954"/>
<dbReference type="GeneID" id="100126041"/>
<dbReference type="KEGG" id="bta:100126041"/>
<dbReference type="CTD" id="1314"/>
<dbReference type="eggNOG" id="KOG0292">
    <property type="taxonomic scope" value="Eukaryota"/>
</dbReference>
<dbReference type="HOGENOM" id="CLU_007565_1_0_1"/>
<dbReference type="InParanoid" id="Q27954"/>
<dbReference type="OrthoDB" id="10261470at2759"/>
<dbReference type="TreeFam" id="TF105693"/>
<dbReference type="EvolutionaryTrace" id="Q27954"/>
<dbReference type="Proteomes" id="UP000009136">
    <property type="component" value="Unplaced"/>
</dbReference>
<dbReference type="GO" id="GO:0030126">
    <property type="term" value="C:COPI vesicle coat"/>
    <property type="evidence" value="ECO:0000314"/>
    <property type="project" value="UniProtKB"/>
</dbReference>
<dbReference type="GO" id="GO:0005576">
    <property type="term" value="C:extracellular region"/>
    <property type="evidence" value="ECO:0007669"/>
    <property type="project" value="UniProtKB-SubCell"/>
</dbReference>
<dbReference type="GO" id="GO:0000139">
    <property type="term" value="C:Golgi membrane"/>
    <property type="evidence" value="ECO:0007669"/>
    <property type="project" value="UniProtKB-SubCell"/>
</dbReference>
<dbReference type="GO" id="GO:0005179">
    <property type="term" value="F:hormone activity"/>
    <property type="evidence" value="ECO:0007669"/>
    <property type="project" value="UniProtKB-KW"/>
</dbReference>
<dbReference type="GO" id="GO:0005198">
    <property type="term" value="F:structural molecule activity"/>
    <property type="evidence" value="ECO:0007669"/>
    <property type="project" value="InterPro"/>
</dbReference>
<dbReference type="GO" id="GO:0006888">
    <property type="term" value="P:endoplasmic reticulum to Golgi vesicle-mediated transport"/>
    <property type="evidence" value="ECO:0000318"/>
    <property type="project" value="GO_Central"/>
</dbReference>
<dbReference type="GO" id="GO:0006891">
    <property type="term" value="P:intra-Golgi vesicle-mediated transport"/>
    <property type="evidence" value="ECO:0000318"/>
    <property type="project" value="GO_Central"/>
</dbReference>
<dbReference type="GO" id="GO:0006886">
    <property type="term" value="P:intracellular protein transport"/>
    <property type="evidence" value="ECO:0000318"/>
    <property type="project" value="GO_Central"/>
</dbReference>
<dbReference type="GO" id="GO:0006890">
    <property type="term" value="P:retrograde vesicle-mediated transport, Golgi to endoplasmic reticulum"/>
    <property type="evidence" value="ECO:0000318"/>
    <property type="project" value="GO_Central"/>
</dbReference>
<dbReference type="CDD" id="cd22948">
    <property type="entry name" value="Coatomer_WDAD_alpha"/>
    <property type="match status" value="1"/>
</dbReference>
<dbReference type="CDD" id="cd00200">
    <property type="entry name" value="WD40"/>
    <property type="match status" value="1"/>
</dbReference>
<dbReference type="FunFam" id="1.25.40.470:FF:000002">
    <property type="entry name" value="Coatomer subunit alpha"/>
    <property type="match status" value="1"/>
</dbReference>
<dbReference type="FunFam" id="2.130.10.10:FF:000010">
    <property type="entry name" value="Coatomer subunit alpha"/>
    <property type="match status" value="1"/>
</dbReference>
<dbReference type="Gene3D" id="1.25.40.470">
    <property type="match status" value="1"/>
</dbReference>
<dbReference type="Gene3D" id="2.130.10.10">
    <property type="entry name" value="YVTN repeat-like/Quinoprotein amine dehydrogenase"/>
    <property type="match status" value="1"/>
</dbReference>
<dbReference type="InterPro" id="IPR006692">
    <property type="entry name" value="Beta-prop_COPA/B_2nd"/>
</dbReference>
<dbReference type="InterPro" id="IPR047312">
    <property type="entry name" value="Coatomer_alpha_WD-assoc_reg"/>
</dbReference>
<dbReference type="InterPro" id="IPR016391">
    <property type="entry name" value="Coatomer_asu"/>
</dbReference>
<dbReference type="InterPro" id="IPR010714">
    <property type="entry name" value="Coatomer_asu_C"/>
</dbReference>
<dbReference type="InterPro" id="IPR050844">
    <property type="entry name" value="Coatomer_complex_subunit"/>
</dbReference>
<dbReference type="InterPro" id="IPR020472">
    <property type="entry name" value="G-protein_beta_WD-40_rep"/>
</dbReference>
<dbReference type="InterPro" id="IPR056176">
    <property type="entry name" value="TPR_COPA_B"/>
</dbReference>
<dbReference type="InterPro" id="IPR015943">
    <property type="entry name" value="WD40/YVTN_repeat-like_dom_sf"/>
</dbReference>
<dbReference type="InterPro" id="IPR019775">
    <property type="entry name" value="WD40_repeat_CS"/>
</dbReference>
<dbReference type="InterPro" id="IPR036322">
    <property type="entry name" value="WD40_repeat_dom_sf"/>
</dbReference>
<dbReference type="InterPro" id="IPR001680">
    <property type="entry name" value="WD40_rpt"/>
</dbReference>
<dbReference type="PANTHER" id="PTHR19876">
    <property type="entry name" value="COATOMER"/>
    <property type="match status" value="1"/>
</dbReference>
<dbReference type="PANTHER" id="PTHR19876:SF1">
    <property type="entry name" value="COATOMER SUBUNIT ALPHA"/>
    <property type="match status" value="1"/>
</dbReference>
<dbReference type="Pfam" id="PF04053">
    <property type="entry name" value="B-prop_COPA_B_2nd"/>
    <property type="match status" value="1"/>
</dbReference>
<dbReference type="Pfam" id="PF06957">
    <property type="entry name" value="COPI_C"/>
    <property type="match status" value="1"/>
</dbReference>
<dbReference type="Pfam" id="PF23953">
    <property type="entry name" value="TPR_COPA_B"/>
    <property type="match status" value="1"/>
</dbReference>
<dbReference type="Pfam" id="PF00400">
    <property type="entry name" value="WD40"/>
    <property type="match status" value="6"/>
</dbReference>
<dbReference type="PIRSF" id="PIRSF003354">
    <property type="entry name" value="Coatomer_alpha_subunit"/>
    <property type="match status" value="1"/>
</dbReference>
<dbReference type="PRINTS" id="PR00320">
    <property type="entry name" value="GPROTEINBRPT"/>
</dbReference>
<dbReference type="SMART" id="SM00320">
    <property type="entry name" value="WD40"/>
    <property type="match status" value="7"/>
</dbReference>
<dbReference type="SUPFAM" id="SSF50978">
    <property type="entry name" value="WD40 repeat-like"/>
    <property type="match status" value="1"/>
</dbReference>
<dbReference type="PROSITE" id="PS00678">
    <property type="entry name" value="WD_REPEATS_1"/>
    <property type="match status" value="1"/>
</dbReference>
<dbReference type="PROSITE" id="PS50082">
    <property type="entry name" value="WD_REPEATS_2"/>
    <property type="match status" value="6"/>
</dbReference>
<dbReference type="PROSITE" id="PS50294">
    <property type="entry name" value="WD_REPEATS_REGION"/>
    <property type="match status" value="1"/>
</dbReference>
<gene>
    <name type="primary">COPA</name>
</gene>
<evidence type="ECO:0000250" key="1"/>
<evidence type="ECO:0000250" key="2">
    <source>
        <dbReference type="UniProtKB" id="P53621"/>
    </source>
</evidence>
<evidence type="ECO:0000250" key="3">
    <source>
        <dbReference type="UniProtKB" id="Q8CIE6"/>
    </source>
</evidence>
<evidence type="ECO:0000305" key="4"/>
<evidence type="ECO:0007829" key="5">
    <source>
        <dbReference type="PDB" id="3MKR"/>
    </source>
</evidence>
<proteinExistence type="evidence at protein level"/>
<protein>
    <recommendedName>
        <fullName>Coatomer subunit alpha</fullName>
    </recommendedName>
    <alternativeName>
        <fullName>Alpha-coat protein</fullName>
        <shortName>Alpha-COP</shortName>
    </alternativeName>
    <alternativeName>
        <fullName>HEP-COP</fullName>
        <shortName>HEPCOP</shortName>
    </alternativeName>
    <component>
        <recommendedName>
            <fullName>Xenin</fullName>
        </recommendedName>
        <alternativeName>
            <fullName>Xenopsin-related peptide</fullName>
        </alternativeName>
    </component>
    <component>
        <recommendedName>
            <fullName>Proxenin</fullName>
        </recommendedName>
    </component>
</protein>
<feature type="chain" id="PRO_0000223305" description="Coatomer subunit alpha">
    <location>
        <begin position="1"/>
        <end position="1224"/>
    </location>
</feature>
<feature type="peptide" id="PRO_0000041398" description="Proxenin">
    <location>
        <begin position="1"/>
        <end position="35"/>
    </location>
</feature>
<feature type="peptide" id="PRO_0000041399" description="Xenin">
    <location>
        <begin position="1"/>
        <end position="25"/>
    </location>
</feature>
<feature type="repeat" description="WD 1">
    <location>
        <begin position="7"/>
        <end position="37"/>
    </location>
</feature>
<feature type="repeat" description="WD 2">
    <location>
        <begin position="49"/>
        <end position="79"/>
    </location>
</feature>
<feature type="repeat" description="WD 3">
    <location>
        <begin position="91"/>
        <end position="121"/>
    </location>
</feature>
<feature type="repeat" description="WD 4">
    <location>
        <begin position="133"/>
        <end position="163"/>
    </location>
</feature>
<feature type="repeat" description="WD 5">
    <location>
        <begin position="203"/>
        <end position="233"/>
    </location>
</feature>
<feature type="repeat" description="WD 6">
    <location>
        <begin position="247"/>
        <end position="277"/>
    </location>
</feature>
<feature type="modified residue" description="Phosphoserine" evidence="2">
    <location>
        <position position="173"/>
    </location>
</feature>
<feature type="modified residue" description="Phosphothreonine" evidence="2">
    <location>
        <position position="185"/>
    </location>
</feature>
<feature type="modified residue" description="Phosphothreonine" evidence="2">
    <location>
        <position position="591"/>
    </location>
</feature>
<feature type="modified residue" description="Omega-N-methylarginine" evidence="2">
    <location>
        <position position="965"/>
    </location>
</feature>
<feature type="modified residue" description="Phosphoserine" evidence="2">
    <location>
        <position position="1193"/>
    </location>
</feature>
<feature type="sequence conflict" description="In Ref. 2; AAI53252." evidence="4" ref="2">
    <original>T</original>
    <variation>S</variation>
    <location>
        <position position="402"/>
    </location>
</feature>
<feature type="helix" evidence="5">
    <location>
        <begin position="916"/>
        <end position="923"/>
    </location>
</feature>
<feature type="helix" evidence="5">
    <location>
        <begin position="927"/>
        <end position="932"/>
    </location>
</feature>
<feature type="helix" evidence="5">
    <location>
        <begin position="936"/>
        <end position="946"/>
    </location>
</feature>
<feature type="helix" evidence="5">
    <location>
        <begin position="953"/>
        <end position="955"/>
    </location>
</feature>
<feature type="helix" evidence="5">
    <location>
        <begin position="956"/>
        <end position="963"/>
    </location>
</feature>
<feature type="strand" evidence="5">
    <location>
        <begin position="968"/>
        <end position="970"/>
    </location>
</feature>
<feature type="strand" evidence="5">
    <location>
        <begin position="979"/>
        <end position="981"/>
    </location>
</feature>
<feature type="turn" evidence="5">
    <location>
        <begin position="985"/>
        <end position="989"/>
    </location>
</feature>
<feature type="strand" evidence="5">
    <location>
        <begin position="992"/>
        <end position="994"/>
    </location>
</feature>
<feature type="helix" evidence="5">
    <location>
        <begin position="1003"/>
        <end position="1018"/>
    </location>
</feature>
<feature type="helix" evidence="5">
    <location>
        <begin position="1022"/>
        <end position="1035"/>
    </location>
</feature>
<feature type="helix" evidence="5">
    <location>
        <begin position="1036"/>
        <end position="1038"/>
    </location>
</feature>
<feature type="helix" evidence="5">
    <location>
        <begin position="1044"/>
        <end position="1070"/>
    </location>
</feature>
<feature type="helix" evidence="5">
    <location>
        <begin position="1078"/>
        <end position="1091"/>
    </location>
</feature>
<feature type="helix" evidence="5">
    <location>
        <begin position="1098"/>
        <end position="1114"/>
    </location>
</feature>
<feature type="helix" evidence="5">
    <location>
        <begin position="1118"/>
        <end position="1130"/>
    </location>
</feature>
<feature type="helix" evidence="5">
    <location>
        <begin position="1135"/>
        <end position="1150"/>
    </location>
</feature>
<feature type="strand" evidence="5">
    <location>
        <begin position="1154"/>
        <end position="1156"/>
    </location>
</feature>
<feature type="turn" evidence="5">
    <location>
        <begin position="1170"/>
        <end position="1172"/>
    </location>
</feature>
<feature type="turn" evidence="5">
    <location>
        <begin position="1186"/>
        <end position="1188"/>
    </location>
</feature>
<feature type="helix" evidence="5">
    <location>
        <begin position="1194"/>
        <end position="1196"/>
    </location>
</feature>
<feature type="turn" evidence="5">
    <location>
        <begin position="1202"/>
        <end position="1204"/>
    </location>
</feature>
<feature type="strand" evidence="5">
    <location>
        <begin position="1205"/>
        <end position="1210"/>
    </location>
</feature>
<feature type="helix" evidence="5">
    <location>
        <begin position="1220"/>
        <end position="1222"/>
    </location>
</feature>
<sequence length="1224" mass="138359">MLTKFETKSARVKGLSFHPKRPWILTSLHNGVIQLWDYRMCTLIDKFDEHDGPVRGIDFHKQQPLFVSGGDDYKIKVWNYKLRRCLFTLLGHLDYIRTTFFHHEYPWILSASDDQTIRVWNWQSRTCVCVLTGHNHYVMCAQFHPSEDLVVSASLDQTVRVWDISGLRKKNLSPGAVESDVRGITGVDLFGTTDAVVKHVLEGHDRGVNWAAFHPTMPLIVSGADDRQVKIWRMNESKAWEVDTCRGHYNNVSCAVFHPRQELILSNSEDKSIRVWDMSKRTGVQTFRRDHDRFWVLAAHPNLNLFAAGHDGGMIVFKLERERPAYAVHGNMLHYVKDRFLRQLDFNSSKDVAVMQLRSGSKFPVFSMSYNPAENAVLLCTRASNLENSTYDLYTIPKDADTQNPDAPEGKRSSGLTAVWVARNRFAVLDRMHSLLIKNLKNEITKKVQVPNCDEIFYAGTGNLLLRDAESITLFDVQQKRTLASVKISKVKYVIWSADMSHVALLAKHAIVICNRKLEALCNIHENIRVKSGAWDESGVFIYTTSNHIKYAVTTGDYGIIRTLDLPIYVTRVKGNNVYCLDRECRPRVLTIDPTEFKFKLALINRKYDEVLHMVRNAKLVGQSIIAYLQKKGYPEVALHFVKDEKTRFSLALECGNIEIALEAAKALDDKNCWEKLGEVALLQGNHQIVEMCYQRTKNFDKLSFLYLITGNLEKLRKMMKIAEIRKDMSGHYQNALYLGDVSERVRILKNCGQKSLAYLTAATHGLDEEAESLKETFDPEKETIPDIDPNAKLLQPPAPIMPLDTNWPLLTVSKGFFEGSIASKGKGGALAADIDIDTVGTEGWGEDAELQLDEDGFVEATEGLGDDALGKGQEEGGGWDVEEDLELPPELDIPPGAAGGAEDGFFVPPTKGTSPTQIWCNNSQLPVDHILAGSFETAMRLLHDQVGVTQFGPYKQLFLQTYARGRTTYQALPCLPSMYGYPNRNWKDAGLKNGVPAVGLKLNDLIQRLQLCYQLTTVGKFEEAVEKFRSILLSVPLLVVDNKQEIAEAQQLITICREYIVGLSMETERKKLPKETLEQQKRICEMAAYFTHSNLQPVHMILVLRTALNLFFKLKNFRTAAAFARRLLELGPKPEVAQQTRKILSACEKNPTDAYQLNYDMHNPFDICAASYRPIYRGKPVEKCPLSGACYSPEFKGQICKVTTVTEIGKDVIGLRISPLQFR</sequence>
<keyword id="KW-0002">3D-structure</keyword>
<keyword id="KW-0963">Cytoplasm</keyword>
<keyword id="KW-0968">Cytoplasmic vesicle</keyword>
<keyword id="KW-0903">Direct protein sequencing</keyword>
<keyword id="KW-0931">ER-Golgi transport</keyword>
<keyword id="KW-0333">Golgi apparatus</keyword>
<keyword id="KW-0372">Hormone</keyword>
<keyword id="KW-0472">Membrane</keyword>
<keyword id="KW-0488">Methylation</keyword>
<keyword id="KW-0597">Phosphoprotein</keyword>
<keyword id="KW-0653">Protein transport</keyword>
<keyword id="KW-1185">Reference proteome</keyword>
<keyword id="KW-0677">Repeat</keyword>
<keyword id="KW-0964">Secreted</keyword>
<keyword id="KW-0813">Transport</keyword>
<keyword id="KW-0853">WD repeat</keyword>
<accession>Q27954</accession>
<accession>A7Z053</accession>
<reference key="1">
    <citation type="journal article" date="1996" name="J. Cell Biol.">
        <title>Architecture of coatomer: molecular characterization of delta-COP and protein interactions within the complex.</title>
        <authorList>
            <person name="Faulstich D."/>
            <person name="Auerbach S."/>
            <person name="Orci L."/>
            <person name="Ravazzola M."/>
            <person name="Wegehingel S."/>
            <person name="Lottspeich F."/>
            <person name="Stenbeck G."/>
            <person name="Harter C."/>
            <person name="Wieland F.T."/>
            <person name="Tschochner H."/>
        </authorList>
    </citation>
    <scope>NUCLEOTIDE SEQUENCE [MRNA]</scope>
    <scope>PROTEIN SEQUENCE OF 1-25; 161-168; 296-306; 314-331; 383-398; 413-431; 518-529; 676-691; 728-742; 776-793; 968-980; 1010-1020; 1087-1100 AND 1202-1208</scope>
    <source>
        <tissue>Liver</tissue>
    </source>
</reference>
<reference key="2">
    <citation type="submission" date="2007-09" db="EMBL/GenBank/DDBJ databases">
        <authorList>
            <consortium name="NIH - Mammalian Gene Collection (MGC) project"/>
        </authorList>
    </citation>
    <scope>NUCLEOTIDE SEQUENCE [LARGE SCALE MRNA]</scope>
    <source>
        <strain>Hereford</strain>
        <tissue>Uterus</tissue>
    </source>
</reference>
<reference key="3">
    <citation type="journal article" date="1998" name="J. Cell Biol.">
        <title>Peroxisome biogenesis: involvement of ARF and coatomer.</title>
        <authorList>
            <person name="Passreiter M."/>
            <person name="Anton M."/>
            <person name="Lay D."/>
            <person name="Frank R."/>
            <person name="Harter C."/>
            <person name="Wieland F.T."/>
            <person name="Gorgas K."/>
            <person name="Just W.W."/>
        </authorList>
    </citation>
    <scope>INTERACTION WITH PEX11A</scope>
</reference>
<organism>
    <name type="scientific">Bos taurus</name>
    <name type="common">Bovine</name>
    <dbReference type="NCBI Taxonomy" id="9913"/>
    <lineage>
        <taxon>Eukaryota</taxon>
        <taxon>Metazoa</taxon>
        <taxon>Chordata</taxon>
        <taxon>Craniata</taxon>
        <taxon>Vertebrata</taxon>
        <taxon>Euteleostomi</taxon>
        <taxon>Mammalia</taxon>
        <taxon>Eutheria</taxon>
        <taxon>Laurasiatheria</taxon>
        <taxon>Artiodactyla</taxon>
        <taxon>Ruminantia</taxon>
        <taxon>Pecora</taxon>
        <taxon>Bovidae</taxon>
        <taxon>Bovinae</taxon>
        <taxon>Bos</taxon>
    </lineage>
</organism>
<name>COPA_BOVIN</name>
<comment type="function">
    <text evidence="1">The coatomer is a cytosolic protein complex that binds to dilysine motifs and reversibly associates with Golgi non-clathrin-coated vesicles, which further mediate biosynthetic protein transport from the ER, via the Golgi up to the trans Golgi network. Coatomer complex is required for budding from Golgi membranes, and is essential for the retrograde Golgi-to-ER transport of dilysine-tagged proteins. In mammals, the coatomer can only be recruited by membranes associated to ADP-ribosylation factors (ARFs), which are small GTP-binding proteins; the complex also influences the Golgi structural integrity, as well as the processing, activity, and endocytic recycling of LDL receptors (By similarity).</text>
</comment>
<comment type="function">
    <text evidence="1">Xenin stimulates exocrine pancreatic secretion. It inhibits pentagastrin-stimulated secretion of acid, to induce exocrine pancreatic secretion and to affect small and large intestinal motility. In the gut, xenin interacts with the neurotensin receptor (By similarity).</text>
</comment>
<comment type="subunit">
    <text evidence="1 2 3">Oligomeric complex that consists of at least the alpha, beta, beta', gamma, delta, epsilon and zeta subunits. Interacts with SCYL1. Interacts with JAGN1 (By similarity). Interacts with TMEM41B (By similarity). Interacts with SVEP1 (By similarity). Probably interacts with PEX11A.</text>
</comment>
<comment type="interaction">
    <interactant intactId="EBI-620400">
        <id>Q27954</id>
    </interactant>
    <interactant intactId="EBI-620411">
        <id>P35605</id>
        <label>COPB2</label>
    </interactant>
    <organismsDiffer>false</organismsDiffer>
    <experiments>2</experiments>
</comment>
<comment type="interaction">
    <interactant intactId="EBI-620400">
        <id>Q27954</id>
    </interactant>
    <interactant intactId="EBI-620457">
        <id>Q28104</id>
        <label>COPE</label>
    </interactant>
    <organismsDiffer>false</organismsDiffer>
    <experiments>5</experiments>
</comment>
<comment type="subcellular location">
    <subcellularLocation>
        <location evidence="1">Cytoplasm</location>
    </subcellularLocation>
    <subcellularLocation>
        <location evidence="1">Golgi apparatus membrane</location>
        <topology evidence="1">Peripheral membrane protein</topology>
        <orientation evidence="1">Cytoplasmic side</orientation>
    </subcellularLocation>
    <subcellularLocation>
        <location evidence="1">Cytoplasmic vesicle</location>
        <location evidence="1">COPI-coated vesicle membrane</location>
        <topology evidence="1">Peripheral membrane protein</topology>
        <orientation evidence="1">Cytoplasmic side</orientation>
    </subcellularLocation>
    <text evidence="1">The coatomer is cytoplasmic or polymerized on the cytoplasmic side of the Golgi, as well as on the vesicles/buds originating from it.</text>
</comment>
<comment type="subcellular location">
    <molecule>Xenin</molecule>
    <subcellularLocation>
        <location evidence="1">Secreted</location>
    </subcellularLocation>
</comment>